<protein>
    <recommendedName>
        <fullName evidence="1">GTPase Der</fullName>
    </recommendedName>
    <alternativeName>
        <fullName evidence="1">GTP-binding protein EngA</fullName>
    </alternativeName>
</protein>
<dbReference type="EMBL" id="CP000608">
    <property type="protein sequence ID" value="ABO46622.1"/>
    <property type="molecule type" value="Genomic_DNA"/>
</dbReference>
<dbReference type="RefSeq" id="WP_003025832.1">
    <property type="nucleotide sequence ID" value="NC_009257.1"/>
</dbReference>
<dbReference type="SMR" id="A4IXH0"/>
<dbReference type="KEGG" id="ftw:FTW_0740"/>
<dbReference type="HOGENOM" id="CLU_016077_6_2_6"/>
<dbReference type="GO" id="GO:0005525">
    <property type="term" value="F:GTP binding"/>
    <property type="evidence" value="ECO:0007669"/>
    <property type="project" value="UniProtKB-UniRule"/>
</dbReference>
<dbReference type="GO" id="GO:0043022">
    <property type="term" value="F:ribosome binding"/>
    <property type="evidence" value="ECO:0007669"/>
    <property type="project" value="TreeGrafter"/>
</dbReference>
<dbReference type="GO" id="GO:0042254">
    <property type="term" value="P:ribosome biogenesis"/>
    <property type="evidence" value="ECO:0007669"/>
    <property type="project" value="UniProtKB-KW"/>
</dbReference>
<dbReference type="CDD" id="cd01894">
    <property type="entry name" value="EngA1"/>
    <property type="match status" value="1"/>
</dbReference>
<dbReference type="CDD" id="cd01895">
    <property type="entry name" value="EngA2"/>
    <property type="match status" value="1"/>
</dbReference>
<dbReference type="FunFam" id="3.30.300.20:FF:000004">
    <property type="entry name" value="GTPase Der"/>
    <property type="match status" value="1"/>
</dbReference>
<dbReference type="FunFam" id="3.40.50.300:FF:000040">
    <property type="entry name" value="GTPase Der"/>
    <property type="match status" value="1"/>
</dbReference>
<dbReference type="FunFam" id="3.40.50.300:FF:000057">
    <property type="entry name" value="GTPase Der"/>
    <property type="match status" value="1"/>
</dbReference>
<dbReference type="Gene3D" id="3.30.300.20">
    <property type="match status" value="1"/>
</dbReference>
<dbReference type="Gene3D" id="3.40.50.300">
    <property type="entry name" value="P-loop containing nucleotide triphosphate hydrolases"/>
    <property type="match status" value="2"/>
</dbReference>
<dbReference type="HAMAP" id="MF_00195">
    <property type="entry name" value="GTPase_Der"/>
    <property type="match status" value="1"/>
</dbReference>
<dbReference type="InterPro" id="IPR031166">
    <property type="entry name" value="G_ENGA"/>
</dbReference>
<dbReference type="InterPro" id="IPR006073">
    <property type="entry name" value="GTP-bd"/>
</dbReference>
<dbReference type="InterPro" id="IPR016484">
    <property type="entry name" value="GTPase_Der"/>
</dbReference>
<dbReference type="InterPro" id="IPR032859">
    <property type="entry name" value="KH_dom-like"/>
</dbReference>
<dbReference type="InterPro" id="IPR015946">
    <property type="entry name" value="KH_dom-like_a/b"/>
</dbReference>
<dbReference type="InterPro" id="IPR027417">
    <property type="entry name" value="P-loop_NTPase"/>
</dbReference>
<dbReference type="InterPro" id="IPR005225">
    <property type="entry name" value="Small_GTP-bd"/>
</dbReference>
<dbReference type="NCBIfam" id="TIGR03594">
    <property type="entry name" value="GTPase_EngA"/>
    <property type="match status" value="1"/>
</dbReference>
<dbReference type="NCBIfam" id="TIGR00231">
    <property type="entry name" value="small_GTP"/>
    <property type="match status" value="2"/>
</dbReference>
<dbReference type="PANTHER" id="PTHR43834">
    <property type="entry name" value="GTPASE DER"/>
    <property type="match status" value="1"/>
</dbReference>
<dbReference type="PANTHER" id="PTHR43834:SF6">
    <property type="entry name" value="GTPASE DER"/>
    <property type="match status" value="1"/>
</dbReference>
<dbReference type="Pfam" id="PF14714">
    <property type="entry name" value="KH_dom-like"/>
    <property type="match status" value="1"/>
</dbReference>
<dbReference type="Pfam" id="PF01926">
    <property type="entry name" value="MMR_HSR1"/>
    <property type="match status" value="2"/>
</dbReference>
<dbReference type="PIRSF" id="PIRSF006485">
    <property type="entry name" value="GTP-binding_EngA"/>
    <property type="match status" value="1"/>
</dbReference>
<dbReference type="PRINTS" id="PR00326">
    <property type="entry name" value="GTP1OBG"/>
</dbReference>
<dbReference type="SUPFAM" id="SSF52540">
    <property type="entry name" value="P-loop containing nucleoside triphosphate hydrolases"/>
    <property type="match status" value="2"/>
</dbReference>
<dbReference type="PROSITE" id="PS51712">
    <property type="entry name" value="G_ENGA"/>
    <property type="match status" value="2"/>
</dbReference>
<proteinExistence type="inferred from homology"/>
<accession>A4IXH0</accession>
<reference key="1">
    <citation type="journal article" date="2007" name="PLoS ONE">
        <title>Complete genomic characterization of a pathogenic A.II strain of Francisella tularensis subspecies tularensis.</title>
        <authorList>
            <person name="Beckstrom-Sternberg S.M."/>
            <person name="Auerbach R.K."/>
            <person name="Godbole S."/>
            <person name="Pearson J.V."/>
            <person name="Beckstrom-Sternberg J.S."/>
            <person name="Deng Z."/>
            <person name="Munk C."/>
            <person name="Kubota K."/>
            <person name="Zhou Y."/>
            <person name="Bruce D."/>
            <person name="Noronha J."/>
            <person name="Scheuermann R.H."/>
            <person name="Wang A."/>
            <person name="Wei X."/>
            <person name="Wang J."/>
            <person name="Hao J."/>
            <person name="Wagner D.M."/>
            <person name="Brettin T.S."/>
            <person name="Brown N."/>
            <person name="Gilna P."/>
            <person name="Keim P.S."/>
        </authorList>
    </citation>
    <scope>NUCLEOTIDE SEQUENCE [LARGE SCALE GENOMIC DNA]</scope>
    <source>
        <strain>WY96-3418</strain>
    </source>
</reference>
<name>DER_FRATW</name>
<organism>
    <name type="scientific">Francisella tularensis subsp. tularensis (strain WY96-3418)</name>
    <dbReference type="NCBI Taxonomy" id="418136"/>
    <lineage>
        <taxon>Bacteria</taxon>
        <taxon>Pseudomonadati</taxon>
        <taxon>Pseudomonadota</taxon>
        <taxon>Gammaproteobacteria</taxon>
        <taxon>Thiotrichales</taxon>
        <taxon>Francisellaceae</taxon>
        <taxon>Francisella</taxon>
    </lineage>
</organism>
<sequence length="465" mass="52443">MSFLVAIVGRANVGKSTLFNVLTNSHDALVFDFEGVTRDRQYGQAKYDDLDYLVVDTGGISDKDVGFDEFMAKQSQIAIDEANLVFFVVDGRSGLTTGDEYVASLLRQKDKKVVVVVNKVDGTDEEAAMAEFYSFGFDKVFAISAAHRRNTQKLVDKFLKKPLNEYYQDYTQTQEHKEQQRHGIHFSLIGRPNVGKSTLTNRMLGEDRVVVFDMPGTTIDSVSIPFERHGQKYTIVDTAGVRKRGKVKQTLEKFSVIKTLQAIQDSNVVVAVVDARQGISDQDLSLIHFAIKNGRALVLAVNKWDGMTEEDRIQVKQDLKRKLFFLQDYVDIHFISALHGTNVGHVFESIDTAYACANKKITTADATRLMQLAVEAHSPPMVGKFRIKLKYAHVGGHNPPVIVIHGNQVSRLPNSYKRYLENFFREALDFRGTPIVFEFKQSENPFADRKNKRSKDEGSKSKKVK</sequence>
<gene>
    <name evidence="1" type="primary">der</name>
    <name type="synonym">engA</name>
    <name type="ordered locus">FTW_0740</name>
</gene>
<feature type="chain" id="PRO_1000011629" description="GTPase Der">
    <location>
        <begin position="1"/>
        <end position="465"/>
    </location>
</feature>
<feature type="domain" description="EngA-type G 1">
    <location>
        <begin position="3"/>
        <end position="166"/>
    </location>
</feature>
<feature type="domain" description="EngA-type G 2">
    <location>
        <begin position="184"/>
        <end position="358"/>
    </location>
</feature>
<feature type="domain" description="KH-like" evidence="1">
    <location>
        <begin position="359"/>
        <end position="443"/>
    </location>
</feature>
<feature type="region of interest" description="Disordered" evidence="2">
    <location>
        <begin position="446"/>
        <end position="465"/>
    </location>
</feature>
<feature type="binding site" evidence="1">
    <location>
        <begin position="9"/>
        <end position="16"/>
    </location>
    <ligand>
        <name>GTP</name>
        <dbReference type="ChEBI" id="CHEBI:37565"/>
        <label>1</label>
    </ligand>
</feature>
<feature type="binding site" evidence="1">
    <location>
        <begin position="56"/>
        <end position="60"/>
    </location>
    <ligand>
        <name>GTP</name>
        <dbReference type="ChEBI" id="CHEBI:37565"/>
        <label>1</label>
    </ligand>
</feature>
<feature type="binding site" evidence="1">
    <location>
        <begin position="118"/>
        <end position="121"/>
    </location>
    <ligand>
        <name>GTP</name>
        <dbReference type="ChEBI" id="CHEBI:37565"/>
        <label>1</label>
    </ligand>
</feature>
<feature type="binding site" evidence="1">
    <location>
        <begin position="190"/>
        <end position="197"/>
    </location>
    <ligand>
        <name>GTP</name>
        <dbReference type="ChEBI" id="CHEBI:37565"/>
        <label>2</label>
    </ligand>
</feature>
<feature type="binding site" evidence="1">
    <location>
        <begin position="237"/>
        <end position="241"/>
    </location>
    <ligand>
        <name>GTP</name>
        <dbReference type="ChEBI" id="CHEBI:37565"/>
        <label>2</label>
    </ligand>
</feature>
<feature type="binding site" evidence="1">
    <location>
        <begin position="302"/>
        <end position="305"/>
    </location>
    <ligand>
        <name>GTP</name>
        <dbReference type="ChEBI" id="CHEBI:37565"/>
        <label>2</label>
    </ligand>
</feature>
<evidence type="ECO:0000255" key="1">
    <source>
        <dbReference type="HAMAP-Rule" id="MF_00195"/>
    </source>
</evidence>
<evidence type="ECO:0000256" key="2">
    <source>
        <dbReference type="SAM" id="MobiDB-lite"/>
    </source>
</evidence>
<comment type="function">
    <text evidence="1">GTPase that plays an essential role in the late steps of ribosome biogenesis.</text>
</comment>
<comment type="subunit">
    <text evidence="1">Associates with the 50S ribosomal subunit.</text>
</comment>
<comment type="similarity">
    <text evidence="1">Belongs to the TRAFAC class TrmE-Era-EngA-EngB-Septin-like GTPase superfamily. EngA (Der) GTPase family.</text>
</comment>
<keyword id="KW-0342">GTP-binding</keyword>
<keyword id="KW-0547">Nucleotide-binding</keyword>
<keyword id="KW-0677">Repeat</keyword>
<keyword id="KW-0690">Ribosome biogenesis</keyword>